<gene>
    <name type="primary">tif471</name>
    <name type="ORF">SPAC17C9.03</name>
</gene>
<accession>Q10475</accession>
<accession>P78832</accession>
<evidence type="ECO:0000256" key="1">
    <source>
        <dbReference type="SAM" id="MobiDB-lite"/>
    </source>
</evidence>
<evidence type="ECO:0000269" key="2">
    <source>
    </source>
</evidence>
<evidence type="ECO:0000269" key="3">
    <source>
    </source>
</evidence>
<evidence type="ECO:0000305" key="4"/>
<feature type="chain" id="PRO_0000213333" description="Eukaryotic translation initiation factor 4 gamma">
    <location>
        <begin position="1"/>
        <end position="1403"/>
    </location>
</feature>
<feature type="domain" description="MIF4G">
    <location>
        <begin position="1009"/>
        <end position="1245"/>
    </location>
</feature>
<feature type="region of interest" description="Disordered" evidence="1">
    <location>
        <begin position="1"/>
        <end position="381"/>
    </location>
</feature>
<feature type="region of interest" description="Disordered" evidence="1">
    <location>
        <begin position="439"/>
        <end position="464"/>
    </location>
</feature>
<feature type="region of interest" description="Disordered" evidence="1">
    <location>
        <begin position="488"/>
        <end position="774"/>
    </location>
</feature>
<feature type="region of interest" description="Disordered" evidence="1">
    <location>
        <begin position="861"/>
        <end position="1003"/>
    </location>
</feature>
<feature type="region of interest" description="Disordered" evidence="1">
    <location>
        <begin position="1266"/>
        <end position="1403"/>
    </location>
</feature>
<feature type="compositionally biased region" description="Polar residues" evidence="1">
    <location>
        <begin position="1"/>
        <end position="11"/>
    </location>
</feature>
<feature type="compositionally biased region" description="Polar residues" evidence="1">
    <location>
        <begin position="19"/>
        <end position="39"/>
    </location>
</feature>
<feature type="compositionally biased region" description="Polar residues" evidence="1">
    <location>
        <begin position="50"/>
        <end position="60"/>
    </location>
</feature>
<feature type="compositionally biased region" description="Polar residues" evidence="1">
    <location>
        <begin position="109"/>
        <end position="137"/>
    </location>
</feature>
<feature type="compositionally biased region" description="Low complexity" evidence="1">
    <location>
        <begin position="190"/>
        <end position="208"/>
    </location>
</feature>
<feature type="compositionally biased region" description="Low complexity" evidence="1">
    <location>
        <begin position="231"/>
        <end position="248"/>
    </location>
</feature>
<feature type="compositionally biased region" description="Polar residues" evidence="1">
    <location>
        <begin position="249"/>
        <end position="269"/>
    </location>
</feature>
<feature type="compositionally biased region" description="Low complexity" evidence="1">
    <location>
        <begin position="270"/>
        <end position="291"/>
    </location>
</feature>
<feature type="compositionally biased region" description="Basic and acidic residues" evidence="1">
    <location>
        <begin position="298"/>
        <end position="308"/>
    </location>
</feature>
<feature type="compositionally biased region" description="Low complexity" evidence="1">
    <location>
        <begin position="325"/>
        <end position="334"/>
    </location>
</feature>
<feature type="compositionally biased region" description="Polar residues" evidence="1">
    <location>
        <begin position="346"/>
        <end position="381"/>
    </location>
</feature>
<feature type="compositionally biased region" description="Polar residues" evidence="1">
    <location>
        <begin position="439"/>
        <end position="460"/>
    </location>
</feature>
<feature type="compositionally biased region" description="Polar residues" evidence="1">
    <location>
        <begin position="493"/>
        <end position="508"/>
    </location>
</feature>
<feature type="compositionally biased region" description="Basic and acidic residues" evidence="1">
    <location>
        <begin position="537"/>
        <end position="714"/>
    </location>
</feature>
<feature type="compositionally biased region" description="Polar residues" evidence="1">
    <location>
        <begin position="720"/>
        <end position="737"/>
    </location>
</feature>
<feature type="compositionally biased region" description="Basic and acidic residues" evidence="1">
    <location>
        <begin position="741"/>
        <end position="754"/>
    </location>
</feature>
<feature type="compositionally biased region" description="Low complexity" evidence="1">
    <location>
        <begin position="757"/>
        <end position="768"/>
    </location>
</feature>
<feature type="compositionally biased region" description="Low complexity" evidence="1">
    <location>
        <begin position="868"/>
        <end position="886"/>
    </location>
</feature>
<feature type="compositionally biased region" description="Basic and acidic residues" evidence="1">
    <location>
        <begin position="986"/>
        <end position="995"/>
    </location>
</feature>
<feature type="compositionally biased region" description="Basic and acidic residues" evidence="1">
    <location>
        <begin position="1284"/>
        <end position="1295"/>
    </location>
</feature>
<feature type="compositionally biased region" description="Polar residues" evidence="1">
    <location>
        <begin position="1302"/>
        <end position="1313"/>
    </location>
</feature>
<feature type="compositionally biased region" description="Polar residues" evidence="1">
    <location>
        <begin position="1328"/>
        <end position="1341"/>
    </location>
</feature>
<feature type="compositionally biased region" description="Polar residues" evidence="1">
    <location>
        <begin position="1348"/>
        <end position="1358"/>
    </location>
</feature>
<feature type="compositionally biased region" description="Basic and acidic residues" evidence="1">
    <location>
        <begin position="1383"/>
        <end position="1403"/>
    </location>
</feature>
<feature type="modified residue" description="Phosphoserine" evidence="3">
    <location>
        <position position="83"/>
    </location>
</feature>
<feature type="modified residue" description="Phosphoserine" evidence="3">
    <location>
        <position position="452"/>
    </location>
</feature>
<feature type="modified residue" description="Phosphoserine" evidence="3">
    <location>
        <position position="455"/>
    </location>
</feature>
<feature type="modified residue" description="Phosphoserine" evidence="3">
    <location>
        <position position="456"/>
    </location>
</feature>
<feature type="modified residue" description="Phosphoserine" evidence="3">
    <location>
        <position position="459"/>
    </location>
</feature>
<feature type="modified residue" description="Phosphoserine" evidence="3">
    <location>
        <position position="866"/>
    </location>
</feature>
<feature type="modified residue" description="Phosphoserine" evidence="3">
    <location>
        <position position="882"/>
    </location>
</feature>
<feature type="modified residue" description="Phosphothreonine" evidence="3">
    <location>
        <position position="884"/>
    </location>
</feature>
<feature type="modified residue" description="Phosphoserine" evidence="3">
    <location>
        <position position="886"/>
    </location>
</feature>
<feature type="modified residue" description="Phosphoserine" evidence="3">
    <location>
        <position position="911"/>
    </location>
</feature>
<feature type="modified residue" description="Phosphoserine" evidence="3">
    <location>
        <position position="919"/>
    </location>
</feature>
<feature type="modified residue" description="Phosphoserine" evidence="3">
    <location>
        <position position="921"/>
    </location>
</feature>
<feature type="modified residue" description="Phosphotyrosine" evidence="3">
    <location>
        <position position="923"/>
    </location>
</feature>
<feature type="modified residue" description="Phosphoserine" evidence="3">
    <location>
        <position position="1333"/>
    </location>
</feature>
<feature type="sequence conflict" description="In Ref. 3; BAA13842." evidence="4" ref="3">
    <original>N</original>
    <variation>T</variation>
    <location>
        <position position="1017"/>
    </location>
</feature>
<feature type="sequence conflict" description="In Ref. 3; BAA13842." evidence="4" ref="3">
    <original>K</original>
    <variation>L</variation>
    <location>
        <position position="1249"/>
    </location>
</feature>
<feature type="sequence conflict" description="In Ref. 3; BAA13842." evidence="4" ref="3">
    <original>E</original>
    <variation>G</variation>
    <location>
        <position position="1253"/>
    </location>
</feature>
<feature type="sequence conflict" description="In Ref. 3; BAA13842." evidence="4" ref="3">
    <original>K</original>
    <variation>G</variation>
    <location>
        <position position="1257"/>
    </location>
</feature>
<feature type="sequence conflict" description="In Ref. 3; BAA13842." evidence="4" ref="3">
    <original>N</original>
    <variation>T</variation>
    <location>
        <position position="1301"/>
    </location>
</feature>
<feature type="sequence conflict" description="In Ref. 3; BAA13842." evidence="4" ref="3">
    <original>F</original>
    <variation>P</variation>
    <location>
        <position position="1304"/>
    </location>
</feature>
<feature type="sequence conflict" description="In Ref. 3; BAA13842." evidence="4" ref="3">
    <original>S</original>
    <variation>Y</variation>
    <location>
        <position position="1353"/>
    </location>
</feature>
<protein>
    <recommendedName>
        <fullName>Eukaryotic translation initiation factor 4 gamma</fullName>
        <shortName>eIF-4-gamma</shortName>
        <shortName>eIF-4G</shortName>
    </recommendedName>
</protein>
<dbReference type="EMBL" id="CU329670">
    <property type="protein sequence ID" value="CAA97349.1"/>
    <property type="molecule type" value="Genomic_DNA"/>
</dbReference>
<dbReference type="EMBL" id="D89180">
    <property type="protein sequence ID" value="BAA13842.1"/>
    <property type="molecule type" value="mRNA"/>
</dbReference>
<dbReference type="PIR" id="T11583">
    <property type="entry name" value="T11583"/>
</dbReference>
<dbReference type="PIR" id="T42624">
    <property type="entry name" value="T42624"/>
</dbReference>
<dbReference type="RefSeq" id="NP_594602.1">
    <property type="nucleotide sequence ID" value="NM_001020030.2"/>
</dbReference>
<dbReference type="SMR" id="Q10475"/>
<dbReference type="BioGRID" id="278758">
    <property type="interactions" value="17"/>
</dbReference>
<dbReference type="ELM" id="Q10475"/>
<dbReference type="FunCoup" id="Q10475">
    <property type="interactions" value="88"/>
</dbReference>
<dbReference type="IntAct" id="Q10475">
    <property type="interactions" value="2"/>
</dbReference>
<dbReference type="STRING" id="284812.Q10475"/>
<dbReference type="iPTMnet" id="Q10475"/>
<dbReference type="PaxDb" id="4896-SPAC17C9.03.1"/>
<dbReference type="EnsemblFungi" id="SPAC17C9.03.1">
    <property type="protein sequence ID" value="SPAC17C9.03.1:pep"/>
    <property type="gene ID" value="SPAC17C9.03"/>
</dbReference>
<dbReference type="GeneID" id="2542290"/>
<dbReference type="KEGG" id="spo:2542290"/>
<dbReference type="PomBase" id="SPAC17C9.03">
    <property type="gene designation" value="tif471"/>
</dbReference>
<dbReference type="VEuPathDB" id="FungiDB:SPAC17C9.03"/>
<dbReference type="eggNOG" id="KOG0401">
    <property type="taxonomic scope" value="Eukaryota"/>
</dbReference>
<dbReference type="HOGENOM" id="CLU_254179_0_0_1"/>
<dbReference type="InParanoid" id="Q10475"/>
<dbReference type="OMA" id="QFYSVIT"/>
<dbReference type="Reactome" id="R-SPO-156827">
    <property type="pathway name" value="L13a-mediated translational silencing of Ceruloplasmin expression"/>
</dbReference>
<dbReference type="Reactome" id="R-SPO-166208">
    <property type="pathway name" value="mTORC1-mediated signalling"/>
</dbReference>
<dbReference type="Reactome" id="R-SPO-72649">
    <property type="pathway name" value="Translation initiation complex formation"/>
</dbReference>
<dbReference type="Reactome" id="R-SPO-72662">
    <property type="pathway name" value="Activation of the mRNA upon binding of the cap-binding complex and eIFs, and subsequent binding to 43S"/>
</dbReference>
<dbReference type="Reactome" id="R-SPO-72702">
    <property type="pathway name" value="Ribosomal scanning and start codon recognition"/>
</dbReference>
<dbReference type="Reactome" id="R-SPO-72706">
    <property type="pathway name" value="GTP hydrolysis and joining of the 60S ribosomal subunit"/>
</dbReference>
<dbReference type="Reactome" id="R-SPO-975956">
    <property type="pathway name" value="Nonsense Mediated Decay (NMD) independent of the Exon Junction Complex (EJC)"/>
</dbReference>
<dbReference type="Reactome" id="R-SPO-975957">
    <property type="pathway name" value="Nonsense Mediated Decay (NMD) enhanced by the Exon Junction Complex (EJC)"/>
</dbReference>
<dbReference type="PRO" id="PR:Q10475"/>
<dbReference type="Proteomes" id="UP000002485">
    <property type="component" value="Chromosome I"/>
</dbReference>
<dbReference type="GO" id="GO:0005737">
    <property type="term" value="C:cytoplasm"/>
    <property type="evidence" value="ECO:0000314"/>
    <property type="project" value="PomBase"/>
</dbReference>
<dbReference type="GO" id="GO:0010494">
    <property type="term" value="C:cytoplasmic stress granule"/>
    <property type="evidence" value="ECO:0000314"/>
    <property type="project" value="PomBase"/>
</dbReference>
<dbReference type="GO" id="GO:0005829">
    <property type="term" value="C:cytosol"/>
    <property type="evidence" value="ECO:0007005"/>
    <property type="project" value="PomBase"/>
</dbReference>
<dbReference type="GO" id="GO:0016281">
    <property type="term" value="C:eukaryotic translation initiation factor 4F complex"/>
    <property type="evidence" value="ECO:0000318"/>
    <property type="project" value="GO_Central"/>
</dbReference>
<dbReference type="GO" id="GO:0005634">
    <property type="term" value="C:nucleus"/>
    <property type="evidence" value="ECO:0000314"/>
    <property type="project" value="PomBase"/>
</dbReference>
<dbReference type="GO" id="GO:0048471">
    <property type="term" value="C:perinuclear region of cytoplasm"/>
    <property type="evidence" value="ECO:0007669"/>
    <property type="project" value="UniProtKB-SubCell"/>
</dbReference>
<dbReference type="GO" id="GO:0003729">
    <property type="term" value="F:mRNA binding"/>
    <property type="evidence" value="ECO:0000318"/>
    <property type="project" value="GO_Central"/>
</dbReference>
<dbReference type="GO" id="GO:0005198">
    <property type="term" value="F:structural molecule activity"/>
    <property type="evidence" value="ECO:0000304"/>
    <property type="project" value="PomBase"/>
</dbReference>
<dbReference type="GO" id="GO:0003743">
    <property type="term" value="F:translation initiation factor activity"/>
    <property type="evidence" value="ECO:0000318"/>
    <property type="project" value="GO_Central"/>
</dbReference>
<dbReference type="GO" id="GO:0002183">
    <property type="term" value="P:cytoplasmic translational initiation"/>
    <property type="evidence" value="ECO:0000304"/>
    <property type="project" value="PomBase"/>
</dbReference>
<dbReference type="GO" id="GO:0042273">
    <property type="term" value="P:ribosomal large subunit biogenesis"/>
    <property type="evidence" value="ECO:0000266"/>
    <property type="project" value="PomBase"/>
</dbReference>
<dbReference type="GO" id="GO:0006413">
    <property type="term" value="P:translational initiation"/>
    <property type="evidence" value="ECO:0000318"/>
    <property type="project" value="GO_Central"/>
</dbReference>
<dbReference type="FunFam" id="1.25.40.180:FF:000020">
    <property type="entry name" value="Eukaryotic translation initiation factor subunit"/>
    <property type="match status" value="1"/>
</dbReference>
<dbReference type="Gene3D" id="1.25.40.180">
    <property type="match status" value="1"/>
</dbReference>
<dbReference type="Gene3D" id="1.20.970.30">
    <property type="entry name" value="eIF4G, eIF4E-binding domain"/>
    <property type="match status" value="1"/>
</dbReference>
<dbReference type="InterPro" id="IPR016024">
    <property type="entry name" value="ARM-type_fold"/>
</dbReference>
<dbReference type="InterPro" id="IPR022745">
    <property type="entry name" value="eIF4G1_eIF4E-bd"/>
</dbReference>
<dbReference type="InterPro" id="IPR036211">
    <property type="entry name" value="eIF4G_eIF4E-bd_sf"/>
</dbReference>
<dbReference type="InterPro" id="IPR003890">
    <property type="entry name" value="MIF4G-like_typ-3"/>
</dbReference>
<dbReference type="PANTHER" id="PTHR23253">
    <property type="entry name" value="EUKARYOTIC TRANSLATION INITIATION FACTOR 4 GAMMA"/>
    <property type="match status" value="1"/>
</dbReference>
<dbReference type="PANTHER" id="PTHR23253:SF9">
    <property type="entry name" value="EUKARYOTIC TRANSLATION INITIATION FACTOR 4 GAMMA 2"/>
    <property type="match status" value="1"/>
</dbReference>
<dbReference type="Pfam" id="PF12152">
    <property type="entry name" value="eIF_4G1"/>
    <property type="match status" value="1"/>
</dbReference>
<dbReference type="Pfam" id="PF02854">
    <property type="entry name" value="MIF4G"/>
    <property type="match status" value="1"/>
</dbReference>
<dbReference type="SMART" id="SM00543">
    <property type="entry name" value="MIF4G"/>
    <property type="match status" value="1"/>
</dbReference>
<dbReference type="SUPFAM" id="SSF48371">
    <property type="entry name" value="ARM repeat"/>
    <property type="match status" value="1"/>
</dbReference>
<dbReference type="SUPFAM" id="SSF101489">
    <property type="entry name" value="Eukaryotic initiation factor 4f subunit eIF4g, eIF4e-binding domain"/>
    <property type="match status" value="1"/>
</dbReference>
<reference key="1">
    <citation type="journal article" date="2003" name="Genes Cells">
        <title>Overproduction of a conserved domain of fission yeast and mammalian translation initiation factor eIF4G causes aberrant cell morphology and results in disruption of the localization of F-actin and the organization of microtubules.</title>
        <authorList>
            <person name="Hashemzadeh-Bonehi L."/>
            <person name="Curtis P.S."/>
            <person name="Morley S.J."/>
            <person name="Thorpe J.R."/>
            <person name="Pain V.M."/>
        </authorList>
    </citation>
    <scope>NUCLEOTIDE SEQUENCE</scope>
    <scope>FUNCTION</scope>
    <scope>SUBCELLULAR LOCATION</scope>
</reference>
<reference key="2">
    <citation type="journal article" date="2002" name="Nature">
        <title>The genome sequence of Schizosaccharomyces pombe.</title>
        <authorList>
            <person name="Wood V."/>
            <person name="Gwilliam R."/>
            <person name="Rajandream M.A."/>
            <person name="Lyne M.H."/>
            <person name="Lyne R."/>
            <person name="Stewart A."/>
            <person name="Sgouros J.G."/>
            <person name="Peat N."/>
            <person name="Hayles J."/>
            <person name="Baker S.G."/>
            <person name="Basham D."/>
            <person name="Bowman S."/>
            <person name="Brooks K."/>
            <person name="Brown D."/>
            <person name="Brown S."/>
            <person name="Chillingworth T."/>
            <person name="Churcher C.M."/>
            <person name="Collins M."/>
            <person name="Connor R."/>
            <person name="Cronin A."/>
            <person name="Davis P."/>
            <person name="Feltwell T."/>
            <person name="Fraser A."/>
            <person name="Gentles S."/>
            <person name="Goble A."/>
            <person name="Hamlin N."/>
            <person name="Harris D.E."/>
            <person name="Hidalgo J."/>
            <person name="Hodgson G."/>
            <person name="Holroyd S."/>
            <person name="Hornsby T."/>
            <person name="Howarth S."/>
            <person name="Huckle E.J."/>
            <person name="Hunt S."/>
            <person name="Jagels K."/>
            <person name="James K.D."/>
            <person name="Jones L."/>
            <person name="Jones M."/>
            <person name="Leather S."/>
            <person name="McDonald S."/>
            <person name="McLean J."/>
            <person name="Mooney P."/>
            <person name="Moule S."/>
            <person name="Mungall K.L."/>
            <person name="Murphy L.D."/>
            <person name="Niblett D."/>
            <person name="Odell C."/>
            <person name="Oliver K."/>
            <person name="O'Neil S."/>
            <person name="Pearson D."/>
            <person name="Quail M.A."/>
            <person name="Rabbinowitsch E."/>
            <person name="Rutherford K.M."/>
            <person name="Rutter S."/>
            <person name="Saunders D."/>
            <person name="Seeger K."/>
            <person name="Sharp S."/>
            <person name="Skelton J."/>
            <person name="Simmonds M.N."/>
            <person name="Squares R."/>
            <person name="Squares S."/>
            <person name="Stevens K."/>
            <person name="Taylor K."/>
            <person name="Taylor R.G."/>
            <person name="Tivey A."/>
            <person name="Walsh S.V."/>
            <person name="Warren T."/>
            <person name="Whitehead S."/>
            <person name="Woodward J.R."/>
            <person name="Volckaert G."/>
            <person name="Aert R."/>
            <person name="Robben J."/>
            <person name="Grymonprez B."/>
            <person name="Weltjens I."/>
            <person name="Vanstreels E."/>
            <person name="Rieger M."/>
            <person name="Schaefer M."/>
            <person name="Mueller-Auer S."/>
            <person name="Gabel C."/>
            <person name="Fuchs M."/>
            <person name="Duesterhoeft A."/>
            <person name="Fritzc C."/>
            <person name="Holzer E."/>
            <person name="Moestl D."/>
            <person name="Hilbert H."/>
            <person name="Borzym K."/>
            <person name="Langer I."/>
            <person name="Beck A."/>
            <person name="Lehrach H."/>
            <person name="Reinhardt R."/>
            <person name="Pohl T.M."/>
            <person name="Eger P."/>
            <person name="Zimmermann W."/>
            <person name="Wedler H."/>
            <person name="Wambutt R."/>
            <person name="Purnelle B."/>
            <person name="Goffeau A."/>
            <person name="Cadieu E."/>
            <person name="Dreano S."/>
            <person name="Gloux S."/>
            <person name="Lelaure V."/>
            <person name="Mottier S."/>
            <person name="Galibert F."/>
            <person name="Aves S.J."/>
            <person name="Xiang Z."/>
            <person name="Hunt C."/>
            <person name="Moore K."/>
            <person name="Hurst S.M."/>
            <person name="Lucas M."/>
            <person name="Rochet M."/>
            <person name="Gaillardin C."/>
            <person name="Tallada V.A."/>
            <person name="Garzon A."/>
            <person name="Thode G."/>
            <person name="Daga R.R."/>
            <person name="Cruzado L."/>
            <person name="Jimenez J."/>
            <person name="Sanchez M."/>
            <person name="del Rey F."/>
            <person name="Benito J."/>
            <person name="Dominguez A."/>
            <person name="Revuelta J.L."/>
            <person name="Moreno S."/>
            <person name="Armstrong J."/>
            <person name="Forsburg S.L."/>
            <person name="Cerutti L."/>
            <person name="Lowe T."/>
            <person name="McCombie W.R."/>
            <person name="Paulsen I."/>
            <person name="Potashkin J."/>
            <person name="Shpakovski G.V."/>
            <person name="Ussery D."/>
            <person name="Barrell B.G."/>
            <person name="Nurse P."/>
        </authorList>
    </citation>
    <scope>NUCLEOTIDE SEQUENCE [LARGE SCALE GENOMIC DNA]</scope>
    <source>
        <strain>972 / ATCC 24843</strain>
    </source>
</reference>
<reference key="3">
    <citation type="journal article" date="1997" name="DNA Res.">
        <title>Identification of open reading frames in Schizosaccharomyces pombe cDNAs.</title>
        <authorList>
            <person name="Yoshioka S."/>
            <person name="Kato K."/>
            <person name="Nakai K."/>
            <person name="Okayama H."/>
            <person name="Nojima H."/>
        </authorList>
    </citation>
    <scope>NUCLEOTIDE SEQUENCE [LARGE SCALE MRNA] OF 865-1403</scope>
    <source>
        <strain>PR745</strain>
    </source>
</reference>
<reference key="4">
    <citation type="journal article" date="2008" name="J. Proteome Res.">
        <title>Phosphoproteome analysis of fission yeast.</title>
        <authorList>
            <person name="Wilson-Grady J.T."/>
            <person name="Villen J."/>
            <person name="Gygi S.P."/>
        </authorList>
    </citation>
    <scope>PHOSPHORYLATION [LARGE SCALE ANALYSIS] AT SER-83; SER-452; SER-455; SER-456; SER-459; SER-866; SER-882; THR-884; SER-886; SER-911; SER-919; SER-921; TYR-923 AND SER-1333</scope>
    <scope>IDENTIFICATION BY MASS SPECTROMETRY</scope>
</reference>
<comment type="function">
    <text evidence="2">Component of the protein complex eIF4F, which is involved in the recognition of the mRNA cap, ATP-dependent unwinding of 5'-terminal secondary structure and recruitment of mRNA to the ribosome.</text>
</comment>
<comment type="subcellular location">
    <subcellularLocation>
        <location evidence="2">Cytoplasm</location>
        <location evidence="2">Perinuclear region</location>
    </subcellularLocation>
    <text>Localized to the perinuclear region, the growing tips and septum.</text>
</comment>
<comment type="similarity">
    <text evidence="4">Belongs to the eukaryotic initiation factor 4G family.</text>
</comment>
<proteinExistence type="evidence at protein level"/>
<name>IF4G_SCHPO</name>
<keyword id="KW-0963">Cytoplasm</keyword>
<keyword id="KW-0396">Initiation factor</keyword>
<keyword id="KW-0597">Phosphoprotein</keyword>
<keyword id="KW-0648">Protein biosynthesis</keyword>
<keyword id="KW-1185">Reference proteome</keyword>
<keyword id="KW-0694">RNA-binding</keyword>
<organism>
    <name type="scientific">Schizosaccharomyces pombe (strain 972 / ATCC 24843)</name>
    <name type="common">Fission yeast</name>
    <dbReference type="NCBI Taxonomy" id="284812"/>
    <lineage>
        <taxon>Eukaryota</taxon>
        <taxon>Fungi</taxon>
        <taxon>Dikarya</taxon>
        <taxon>Ascomycota</taxon>
        <taxon>Taphrinomycotina</taxon>
        <taxon>Schizosaccharomycetes</taxon>
        <taxon>Schizosaccharomycetales</taxon>
        <taxon>Schizosaccharomycetaceae</taxon>
        <taxon>Schizosaccharomyces</taxon>
    </lineage>
</organism>
<sequence>MSSKPPSNTPKFSYARALASSQSNKSNSTKASENNTATAEKQAVKPSGVEPTNTSRANAQKKTESTGKITSEADTEKYNSSKSPVNKEGSVEKKSSEKSSTNNKPWRGDNTSKPSANSSAERTSSQHQKPETSSQIGKDNAAPVENVNEKSTSQETAPPVSTVPIQFGSITRNAAIPSKPKVSGNMQNKSGVSSYSSKSQSVNSSVTSNPPHTEEPVAAKPEASSTATKGPRPTTSASNTNTSPANGAPTNKPSTDINTTDPATQTTQVSASNSPALSGSSTPSNTSSRSNRQNHGNFSEKRHYDRYGNSHPSYNKYSHYQHGFNYNNSGNNRNESGHPRFRNSRRNYNNQGAYPTYMSNGRSANQSPRNNPQNVNNGSTPIQIPVSLQTPYGQVYGQPQYIVDPNMVQYGPILQPGYVPQYYPVYHQTPYTQNFPNMSRSGSQVSDQVVESPNSSTLSPRNGFAPIVKQQKKSSALKIVNPVTHTEVVVPQKNASSPNPSETNSRAETPTAAPPQISEEEASQRKDAIKLAIQQRIQEKAEAEAKRKAEEKARLEAEENAKREAEEQAKREAEEKAKREAEEKAKREAEEKAKREAEENAKREAEEKAKREAEEKAKREAEEKAKREAEEKAKREAEEKAKREAEEKAKREAEEKAKREAEENAKREAEEKAKREAEENAKREAEEKVKRETEENAKRKAEEEGKREADKNPEIKSSAPLASSEANVDTSKQTNATEPEVVDKTKVEKLKASEGKSTSSLSSPSHSTSSKRDLLSGLESLSLKTNPKSEQCLESLLNSQFITDFSALVYPSTIKPPSTEEALKAGKYEYDVPFLLQFQSVYTDKPMKGWDERMKETVASAFSDKSSRGMYSSSRQSSRSGSNTHSHAGPGFGGPSERKGISRLGIDRGFSSSGAGFGSGSNYKSAPSRGVSHHGHGGMSGSHRGSQRGSRRGGGERDKPDPSSLTIPVDQVAPLQLSANRWQPKKLTEKPAETKGEDEEALLPPEVVQRKVKGSLNKMTLEKFDKISDQILEIAMQSRKENDGRTLKQVIQLTFEKATDEPNFSNMYARFARKMMDSIDDSIRDEGVLDKNNQPVRGGLLFRKYLLSRCQEDFERGWKANLPSGKAGEAEIMSDEYYVAAAIKRRGLGLVRFIGELFKLSMLSEKIMHECIKRLLGNVTDPEEEEIESLCRLLMTVGVNIDATEKGHAAMDVYVLRMETITKIPNLPSRIKFMLMDVMDSRKNGWAVKNEVEKGPKTIAEIHEEAERKKALAESQRPSSGRMHGRDMNRGDSRMGGRGSNPPFSSSDWSNNKDGYARLGQGIRGLKSGTQGSHGPTSLSSMLKGGSVSRTPSRQNSALRREQSVRAPPSNVAVTSANSFELLEEHDHDNDGGQKDSNSKTSS</sequence>